<feature type="chain" id="PRO_0000169033" description="Probable cyclic di-GMP phosphodiesterase PdeD">
    <location>
        <begin position="1"/>
        <end position="532"/>
    </location>
</feature>
<feature type="transmembrane region" description="Helical" evidence="2">
    <location>
        <begin position="16"/>
        <end position="36"/>
    </location>
</feature>
<feature type="transmembrane region" description="Helical" evidence="2">
    <location>
        <begin position="245"/>
        <end position="265"/>
    </location>
</feature>
<feature type="domain" description="EAL" evidence="3">
    <location>
        <begin position="266"/>
        <end position="515"/>
    </location>
</feature>
<comment type="function">
    <text evidence="1 4">Phosphodiesterase (PDE) that catalyzes the hydrolysis of cyclic-di-GMP (c-di-GMP) to 5'-pGpG (By similarity). May serve as a negative regulator of cellulose synthesis (as has been suggested for S.typhimurium); overexpression inhibits cell aggregation in strains able to produce adhesive curli fimbriae. Cyclic-di-GMP is a second messenger which controls cell surface-associated traits in bacteria (PubMed:16513732).</text>
</comment>
<comment type="catalytic activity">
    <reaction evidence="1">
        <text>3',3'-c-di-GMP + H2O = 5'-phosphoguanylyl(3'-&gt;5')guanosine + H(+)</text>
        <dbReference type="Rhea" id="RHEA:24902"/>
        <dbReference type="ChEBI" id="CHEBI:15377"/>
        <dbReference type="ChEBI" id="CHEBI:15378"/>
        <dbReference type="ChEBI" id="CHEBI:58754"/>
        <dbReference type="ChEBI" id="CHEBI:58805"/>
        <dbReference type="EC" id="3.1.4.52"/>
    </reaction>
</comment>
<comment type="subcellular location">
    <subcellularLocation>
        <location evidence="7">Cell membrane</location>
        <topology evidence="2">Multi-pass membrane protein</topology>
    </subcellularLocation>
</comment>
<comment type="induction">
    <text evidence="4 5">Expressed at 28 degrees Celsius in late stationary phase, constitutively expressed at low levels at 37 degrees Celsius, more highly expressed on plates than in liquid medium. Expression is RpoS- and CsgD-dependent.</text>
</comment>
<comment type="disruption phenotype">
    <text evidence="4">Cells lacking this gene show increased aggregation, increased cellulose production but no increase in surface attachment.</text>
</comment>
<keyword id="KW-0973">c-di-GMP</keyword>
<keyword id="KW-1003">Cell membrane</keyword>
<keyword id="KW-0378">Hydrolase</keyword>
<keyword id="KW-0472">Membrane</keyword>
<keyword id="KW-1185">Reference proteome</keyword>
<keyword id="KW-0812">Transmembrane</keyword>
<keyword id="KW-1133">Transmembrane helix</keyword>
<organism>
    <name type="scientific">Escherichia coli (strain K12)</name>
    <dbReference type="NCBI Taxonomy" id="83333"/>
    <lineage>
        <taxon>Bacteria</taxon>
        <taxon>Pseudomonadati</taxon>
        <taxon>Pseudomonadota</taxon>
        <taxon>Gammaproteobacteria</taxon>
        <taxon>Enterobacterales</taxon>
        <taxon>Enterobacteriaceae</taxon>
        <taxon>Escherichia</taxon>
    </lineage>
</organism>
<evidence type="ECO:0000250" key="1">
    <source>
        <dbReference type="UniProtKB" id="P21514"/>
    </source>
</evidence>
<evidence type="ECO:0000255" key="2"/>
<evidence type="ECO:0000255" key="3">
    <source>
        <dbReference type="PROSITE-ProRule" id="PRU00074"/>
    </source>
</evidence>
<evidence type="ECO:0000269" key="4">
    <source>
    </source>
</evidence>
<evidence type="ECO:0000269" key="5">
    <source>
    </source>
</evidence>
<evidence type="ECO:0000303" key="6">
    <source>
    </source>
</evidence>
<evidence type="ECO:0000305" key="7"/>
<sequence length="532" mass="59711">MQKAQRIIKTYRRNRMIVCTICALVTLASTLSVRFISQRNLNQQRVVQFANHAVEELDKVLLPLQAGSEVLLPLIGLPCSVAHLPLRKQAAKLQTVRSIGLVQDGTLYCSSIFGYRNVPVVDILAELPAPQPLLRLTIDRALIKGSPVLIQWTPAAGSSNAGVMEMINIDLLTAMLLEPQLPQISSASLTVDKRHLLYGNGLVDSLPQPEDNENYQVSSQRFPFTINVNGPGATALAWHYLPTQLPLAVLLSLLVGYIAWLATAYRMSFSREINLGLAQHEFELFCQPLLNARSQQCIGVEILLRWNNPRQGWISPDVFIPIAEEHHLIVPLTRYVMAETIRQRHVFPMSSQFHVGINVAPSHFRRGVLIKDLNQYWFSAHPIQQLILEITERDALLDVDYRIARELHRKNVKLAIDDFGTGNSSFSWLETLRPDVLKIDKSFTAAIGSDAVNSTVTDIIIALGQRLNIELVAEGVETQEQAKYLRRHGVHILQGYLYAQPMPLRDFPKWLAGSQPPPARHNGHITPIMPLR</sequence>
<dbReference type="EC" id="3.1.4.52" evidence="1"/>
<dbReference type="EMBL" id="U00096">
    <property type="protein sequence ID" value="AAC74885.2"/>
    <property type="molecule type" value="Genomic_DNA"/>
</dbReference>
<dbReference type="EMBL" id="AP009048">
    <property type="protein sequence ID" value="BAA15622.1"/>
    <property type="molecule type" value="Genomic_DNA"/>
</dbReference>
<dbReference type="PIR" id="G64942">
    <property type="entry name" value="G64942"/>
</dbReference>
<dbReference type="RefSeq" id="NP_416329.4">
    <property type="nucleotide sequence ID" value="NC_000913.3"/>
</dbReference>
<dbReference type="RefSeq" id="WP_001295494.1">
    <property type="nucleotide sequence ID" value="NZ_SSUW01000012.1"/>
</dbReference>
<dbReference type="SMR" id="P76261"/>
<dbReference type="BioGRID" id="4260346">
    <property type="interactions" value="6"/>
</dbReference>
<dbReference type="FunCoup" id="P76261">
    <property type="interactions" value="152"/>
</dbReference>
<dbReference type="IntAct" id="P76261">
    <property type="interactions" value="1"/>
</dbReference>
<dbReference type="STRING" id="511145.b1815"/>
<dbReference type="PaxDb" id="511145-b1815"/>
<dbReference type="EnsemblBacteria" id="AAC74885">
    <property type="protein sequence ID" value="AAC74885"/>
    <property type="gene ID" value="b1815"/>
</dbReference>
<dbReference type="GeneID" id="946336"/>
<dbReference type="KEGG" id="ecj:JW1804"/>
<dbReference type="KEGG" id="eco:b1815"/>
<dbReference type="KEGG" id="ecoc:C3026_10335"/>
<dbReference type="PATRIC" id="fig|511145.12.peg.1892"/>
<dbReference type="EchoBASE" id="EB3289"/>
<dbReference type="eggNOG" id="COG2200">
    <property type="taxonomic scope" value="Bacteria"/>
</dbReference>
<dbReference type="HOGENOM" id="CLU_000445_131_2_6"/>
<dbReference type="InParanoid" id="P76261"/>
<dbReference type="OMA" id="HFHIAIN"/>
<dbReference type="OrthoDB" id="675397at2"/>
<dbReference type="PhylomeDB" id="P76261"/>
<dbReference type="BioCyc" id="EcoCyc:G6996-MONOMER"/>
<dbReference type="PRO" id="PR:P76261"/>
<dbReference type="Proteomes" id="UP000000625">
    <property type="component" value="Chromosome"/>
</dbReference>
<dbReference type="GO" id="GO:0005886">
    <property type="term" value="C:plasma membrane"/>
    <property type="evidence" value="ECO:0000318"/>
    <property type="project" value="GO_Central"/>
</dbReference>
<dbReference type="GO" id="GO:0071111">
    <property type="term" value="F:cyclic-guanylate-specific phosphodiesterase activity"/>
    <property type="evidence" value="ECO:0000318"/>
    <property type="project" value="GO_Central"/>
</dbReference>
<dbReference type="GO" id="GO:0006974">
    <property type="term" value="P:DNA damage response"/>
    <property type="evidence" value="ECO:0000270"/>
    <property type="project" value="EcoliWiki"/>
</dbReference>
<dbReference type="GO" id="GO:1900190">
    <property type="term" value="P:regulation of single-species biofilm formation"/>
    <property type="evidence" value="ECO:0000318"/>
    <property type="project" value="GO_Central"/>
</dbReference>
<dbReference type="CDD" id="cd01948">
    <property type="entry name" value="EAL"/>
    <property type="match status" value="1"/>
</dbReference>
<dbReference type="FunFam" id="3.20.20.450:FF:000004">
    <property type="entry name" value="Cyclic diguanylate phosphodiesterase"/>
    <property type="match status" value="1"/>
</dbReference>
<dbReference type="Gene3D" id="3.20.20.450">
    <property type="entry name" value="EAL domain"/>
    <property type="match status" value="1"/>
</dbReference>
<dbReference type="InterPro" id="IPR024744">
    <property type="entry name" value="CSS-motif_dom"/>
</dbReference>
<dbReference type="InterPro" id="IPR050706">
    <property type="entry name" value="Cyclic-di-GMP_PDE-like"/>
</dbReference>
<dbReference type="InterPro" id="IPR001633">
    <property type="entry name" value="EAL_dom"/>
</dbReference>
<dbReference type="InterPro" id="IPR035919">
    <property type="entry name" value="EAL_sf"/>
</dbReference>
<dbReference type="PANTHER" id="PTHR33121:SF79">
    <property type="entry name" value="CYCLIC DI-GMP PHOSPHODIESTERASE PDED-RELATED"/>
    <property type="match status" value="1"/>
</dbReference>
<dbReference type="PANTHER" id="PTHR33121">
    <property type="entry name" value="CYCLIC DI-GMP PHOSPHODIESTERASE PDEF"/>
    <property type="match status" value="1"/>
</dbReference>
<dbReference type="Pfam" id="PF12792">
    <property type="entry name" value="CSS-motif"/>
    <property type="match status" value="1"/>
</dbReference>
<dbReference type="Pfam" id="PF00563">
    <property type="entry name" value="EAL"/>
    <property type="match status" value="1"/>
</dbReference>
<dbReference type="SMART" id="SM00052">
    <property type="entry name" value="EAL"/>
    <property type="match status" value="1"/>
</dbReference>
<dbReference type="SUPFAM" id="SSF141868">
    <property type="entry name" value="EAL domain-like"/>
    <property type="match status" value="1"/>
</dbReference>
<dbReference type="PROSITE" id="PS50883">
    <property type="entry name" value="EAL"/>
    <property type="match status" value="1"/>
</dbReference>
<gene>
    <name evidence="6" type="primary">pdeD</name>
    <name type="synonym">adrB</name>
    <name type="synonym">yoaD</name>
    <name type="ordered locus">b1815</name>
    <name type="ordered locus">JW1804</name>
</gene>
<proteinExistence type="evidence at transcript level"/>
<accession>P76261</accession>
<accession>P97188</accession>
<accession>P97189</accession>
<name>PDED_ECOLI</name>
<protein>
    <recommendedName>
        <fullName evidence="7">Probable cyclic di-GMP phosphodiesterase PdeD</fullName>
        <ecNumber evidence="1">3.1.4.52</ecNumber>
    </recommendedName>
</protein>
<reference key="1">
    <citation type="journal article" date="1996" name="DNA Res.">
        <title>A 460-kb DNA sequence of the Escherichia coli K-12 genome corresponding to the 40.1-50.0 min region on the linkage map.</title>
        <authorList>
            <person name="Itoh T."/>
            <person name="Aiba H."/>
            <person name="Baba T."/>
            <person name="Fujita K."/>
            <person name="Hayashi K."/>
            <person name="Inada T."/>
            <person name="Isono K."/>
            <person name="Kasai H."/>
            <person name="Kimura S."/>
            <person name="Kitakawa M."/>
            <person name="Kitagawa M."/>
            <person name="Makino K."/>
            <person name="Miki T."/>
            <person name="Mizobuchi K."/>
            <person name="Mori H."/>
            <person name="Mori T."/>
            <person name="Motomura K."/>
            <person name="Nakade S."/>
            <person name="Nakamura Y."/>
            <person name="Nashimoto H."/>
            <person name="Nishio Y."/>
            <person name="Oshima T."/>
            <person name="Saito N."/>
            <person name="Sampei G."/>
            <person name="Seki Y."/>
            <person name="Sivasundaram S."/>
            <person name="Tagami H."/>
            <person name="Takeda J."/>
            <person name="Takemoto K."/>
            <person name="Wada C."/>
            <person name="Yamamoto Y."/>
            <person name="Horiuchi T."/>
        </authorList>
    </citation>
    <scope>NUCLEOTIDE SEQUENCE [LARGE SCALE GENOMIC DNA]</scope>
    <source>
        <strain>K12 / W3110 / ATCC 27325 / DSM 5911</strain>
    </source>
</reference>
<reference key="2">
    <citation type="journal article" date="1997" name="Science">
        <title>The complete genome sequence of Escherichia coli K-12.</title>
        <authorList>
            <person name="Blattner F.R."/>
            <person name="Plunkett G. III"/>
            <person name="Bloch C.A."/>
            <person name="Perna N.T."/>
            <person name="Burland V."/>
            <person name="Riley M."/>
            <person name="Collado-Vides J."/>
            <person name="Glasner J.D."/>
            <person name="Rode C.K."/>
            <person name="Mayhew G.F."/>
            <person name="Gregor J."/>
            <person name="Davis N.W."/>
            <person name="Kirkpatrick H.A."/>
            <person name="Goeden M.A."/>
            <person name="Rose D.J."/>
            <person name="Mau B."/>
            <person name="Shao Y."/>
        </authorList>
    </citation>
    <scope>NUCLEOTIDE SEQUENCE [LARGE SCALE GENOMIC DNA]</scope>
    <source>
        <strain>K12 / MG1655 / ATCC 47076</strain>
    </source>
</reference>
<reference key="3">
    <citation type="journal article" date="2006" name="Mol. Syst. Biol.">
        <title>Highly accurate genome sequences of Escherichia coli K-12 strains MG1655 and W3110.</title>
        <authorList>
            <person name="Hayashi K."/>
            <person name="Morooka N."/>
            <person name="Yamamoto Y."/>
            <person name="Fujita K."/>
            <person name="Isono K."/>
            <person name="Choi S."/>
            <person name="Ohtsubo E."/>
            <person name="Baba T."/>
            <person name="Wanner B.L."/>
            <person name="Mori H."/>
            <person name="Horiuchi T."/>
        </authorList>
    </citation>
    <scope>NUCLEOTIDE SEQUENCE [LARGE SCALE GENOMIC DNA]</scope>
    <source>
        <strain>K12 / W3110 / ATCC 27325 / DSM 5911</strain>
    </source>
</reference>
<reference key="4">
    <citation type="journal article" date="2006" name="J. Bacteriol.">
        <title>Gene expression regulation by the Curli activator CsgD protein: modulation of cellulose biosynthesis and control of negative determinants for microbial adhesion.</title>
        <authorList>
            <person name="Brombacher E."/>
            <person name="Baratto A."/>
            <person name="Dorel C."/>
            <person name="Landini P."/>
        </authorList>
    </citation>
    <scope>REGULATION BY CSGD</scope>
    <scope>INDUCTION</scope>
    <scope>DISRUPTION PHENOTYPE</scope>
    <source>
        <strain>K12 / MG1655 / PHL565</strain>
    </source>
</reference>
<reference key="5">
    <citation type="journal article" date="2009" name="Microbiology">
        <title>Gene expression patterns and differential input into curli fimbriae regulation of all GGDEF/EAL domain proteins in Escherichia coli.</title>
        <authorList>
            <person name="Sommerfeldt N."/>
            <person name="Possling A."/>
            <person name="Becker G."/>
            <person name="Pesavento C."/>
            <person name="Tschowri N."/>
            <person name="Hengge R."/>
        </authorList>
    </citation>
    <scope>INDUCTION</scope>
    <scope>RPOS-DEPENDENCE</scope>
    <source>
        <strain>K12 / W3110 / ATCC 27325 / DSM 5911</strain>
    </source>
</reference>
<reference key="6">
    <citation type="journal article" date="2015" name="J. Bacteriol.">
        <title>Systematic nomenclature for GGDEF and EAL domain-containing cyclic di-GMP turnover proteins of Escherichia coli.</title>
        <authorList>
            <person name="Hengge R."/>
            <person name="Galperin M.Y."/>
            <person name="Ghigo J.M."/>
            <person name="Gomelsky M."/>
            <person name="Green J."/>
            <person name="Hughes K.T."/>
            <person name="Jenal U."/>
            <person name="Landini P."/>
        </authorList>
    </citation>
    <scope>NOMENCLATURE</scope>
</reference>